<gene>
    <name evidence="1" type="primary">malT</name>
    <name type="ordered locus">ECSE_3685</name>
</gene>
<evidence type="ECO:0000255" key="1">
    <source>
        <dbReference type="HAMAP-Rule" id="MF_01247"/>
    </source>
</evidence>
<sequence>MLIPSKLSRPVRLDHTVVRERLLAKLSGANNFRLALITSPAGYGKTTLISQWAAGKNDIGWYSLDEGDNQQERFASYLIAAVQQATNGHCAICETMAQKRQYASLTSLFAQLFIELAEWHSPLYLVIDDYHLITNPVIHESMRFFIRHQPENLTLVVLSRNLPQLGIANLRVRDQLLEIGSQQLAFTHQEAKQFFDCRLSSPIEAAESSRICDDVSGWATALQLIALSARQNTHSAHKSARRLAGINASHLSDYLVDEVLDNVDLATRHFLLKSAILRSMNDALITRVTGEENGQMRLEEIERQGLFLQRMDDTGEWFCYHPLFGNFLRQRCQWELAAELPEIHRAAAESWMAQGFPSEAIHHALAAGDALMLRDILLNHAWSLFNHSELSLLEESLKALPWDSLLENPQLVLLQAWLMQSQHRYGEVNTLLARAEHEIKDIREGTMHAEFNALRAQVAINDGNPDEAERLAKLALEELPPGWFYSRIVATSVLGEVLHCKGELTRSLALMQQTEQMARQHDVWHYALWSLIQQSEILFAQGFLQTAWETQEKAFQLINEQHLEQLPMHEFLVRIRAQLLWAWARLDEAEASARSGIEVLSSYQPQQQLQCLAMLIQCSLARGDLDNARSQLNRLENLLGNGKYHSDWISNANKVRVIYWQMTGDKAAAANWLRHTAKPEFANNHFLQGQWRNIARAQILLGEFEPAEIVLEELNENARSLRLMSDLNRNLLLLNQLYWQAGRKSDAQRVLLDALKLANRTGFISHFVIEGEAMAQQLRQLIQLNTLPELEQHRAQRILREINQHHRHKFAHFDENFVERLLNHPEVPELIRTSPLTQREWQVLGLIYSGYSNEQIAGELEVAATTIKTHIRNLYQKLGVAHRQAAVQHAQKLLKMMGYGV</sequence>
<keyword id="KW-0010">Activator</keyword>
<keyword id="KW-0067">ATP-binding</keyword>
<keyword id="KW-0119">Carbohydrate metabolism</keyword>
<keyword id="KW-0238">DNA-binding</keyword>
<keyword id="KW-0547">Nucleotide-binding</keyword>
<keyword id="KW-0804">Transcription</keyword>
<keyword id="KW-0805">Transcription regulation</keyword>
<feature type="chain" id="PRO_1000139849" description="HTH-type transcriptional regulator MalT">
    <location>
        <begin position="1"/>
        <end position="901"/>
    </location>
</feature>
<feature type="domain" description="HTH luxR-type" evidence="1">
    <location>
        <begin position="829"/>
        <end position="894"/>
    </location>
</feature>
<feature type="DNA-binding region" description="H-T-H motif" evidence="1">
    <location>
        <begin position="853"/>
        <end position="872"/>
    </location>
</feature>
<feature type="binding site" evidence="1">
    <location>
        <begin position="39"/>
        <end position="46"/>
    </location>
    <ligand>
        <name>ATP</name>
        <dbReference type="ChEBI" id="CHEBI:30616"/>
    </ligand>
</feature>
<reference key="1">
    <citation type="journal article" date="2008" name="DNA Res.">
        <title>Complete genome sequence and comparative analysis of the wild-type commensal Escherichia coli strain SE11 isolated from a healthy adult.</title>
        <authorList>
            <person name="Oshima K."/>
            <person name="Toh H."/>
            <person name="Ogura Y."/>
            <person name="Sasamoto H."/>
            <person name="Morita H."/>
            <person name="Park S.-H."/>
            <person name="Ooka T."/>
            <person name="Iyoda S."/>
            <person name="Taylor T.D."/>
            <person name="Hayashi T."/>
            <person name="Itoh K."/>
            <person name="Hattori M."/>
        </authorList>
    </citation>
    <scope>NUCLEOTIDE SEQUENCE [LARGE SCALE GENOMIC DNA]</scope>
    <source>
        <strain>SE11</strain>
    </source>
</reference>
<comment type="function">
    <text evidence="1">Positively regulates the transcription of the maltose regulon whose gene products are responsible for uptake and catabolism of malto-oligosaccharides. Specifically binds to the promoter region of its target genes, recognizing a short DNA motif called the MalT box.</text>
</comment>
<comment type="activity regulation">
    <text evidence="1">Activated by ATP and maltotriose, which are both required for DNA binding.</text>
</comment>
<comment type="subunit">
    <text evidence="1">Monomer in solution. Oligomerizes to an active state in the presence of the positive effectors ATP and maltotriose.</text>
</comment>
<comment type="similarity">
    <text evidence="1">Belongs to the MalT family.</text>
</comment>
<accession>B6I2Y2</accession>
<organism>
    <name type="scientific">Escherichia coli (strain SE11)</name>
    <dbReference type="NCBI Taxonomy" id="409438"/>
    <lineage>
        <taxon>Bacteria</taxon>
        <taxon>Pseudomonadati</taxon>
        <taxon>Pseudomonadota</taxon>
        <taxon>Gammaproteobacteria</taxon>
        <taxon>Enterobacterales</taxon>
        <taxon>Enterobacteriaceae</taxon>
        <taxon>Escherichia</taxon>
    </lineage>
</organism>
<name>MALT_ECOSE</name>
<proteinExistence type="inferred from homology"/>
<protein>
    <recommendedName>
        <fullName evidence="1">HTH-type transcriptional regulator MalT</fullName>
    </recommendedName>
    <alternativeName>
        <fullName evidence="1">ATP-dependent transcriptional activator MalT</fullName>
    </alternativeName>
</protein>
<dbReference type="EMBL" id="AP009240">
    <property type="protein sequence ID" value="BAG79209.1"/>
    <property type="molecule type" value="Genomic_DNA"/>
</dbReference>
<dbReference type="RefSeq" id="WP_000906970.1">
    <property type="nucleotide sequence ID" value="NC_011415.1"/>
</dbReference>
<dbReference type="SMR" id="B6I2Y2"/>
<dbReference type="GeneID" id="75202261"/>
<dbReference type="KEGG" id="ecy:ECSE_3685"/>
<dbReference type="HOGENOM" id="CLU_006325_3_0_6"/>
<dbReference type="Proteomes" id="UP000008199">
    <property type="component" value="Chromosome"/>
</dbReference>
<dbReference type="GO" id="GO:0005524">
    <property type="term" value="F:ATP binding"/>
    <property type="evidence" value="ECO:0007669"/>
    <property type="project" value="UniProtKB-UniRule"/>
</dbReference>
<dbReference type="GO" id="GO:0003677">
    <property type="term" value="F:DNA binding"/>
    <property type="evidence" value="ECO:0007669"/>
    <property type="project" value="UniProtKB-KW"/>
</dbReference>
<dbReference type="GO" id="GO:0003700">
    <property type="term" value="F:DNA-binding transcription factor activity"/>
    <property type="evidence" value="ECO:0007669"/>
    <property type="project" value="UniProtKB-UniRule"/>
</dbReference>
<dbReference type="GO" id="GO:0045913">
    <property type="term" value="P:positive regulation of carbohydrate metabolic process"/>
    <property type="evidence" value="ECO:0007669"/>
    <property type="project" value="UniProtKB-UniRule"/>
</dbReference>
<dbReference type="GO" id="GO:0045893">
    <property type="term" value="P:positive regulation of DNA-templated transcription"/>
    <property type="evidence" value="ECO:0007669"/>
    <property type="project" value="UniProtKB-UniRule"/>
</dbReference>
<dbReference type="CDD" id="cd06170">
    <property type="entry name" value="LuxR_C_like"/>
    <property type="match status" value="1"/>
</dbReference>
<dbReference type="FunFam" id="1.10.10.10:FF:000115">
    <property type="entry name" value="HTH-type transcriptional regulator MalT"/>
    <property type="match status" value="1"/>
</dbReference>
<dbReference type="FunFam" id="1.25.40.10:FF:000086">
    <property type="entry name" value="HTH-type transcriptional regulator MalT"/>
    <property type="match status" value="1"/>
</dbReference>
<dbReference type="Gene3D" id="3.40.50.300">
    <property type="entry name" value="P-loop containing nucleotide triphosphate hydrolases"/>
    <property type="match status" value="1"/>
</dbReference>
<dbReference type="Gene3D" id="1.25.40.10">
    <property type="entry name" value="Tetratricopeptide repeat domain"/>
    <property type="match status" value="1"/>
</dbReference>
<dbReference type="Gene3D" id="1.10.10.10">
    <property type="entry name" value="Winged helix-like DNA-binding domain superfamily/Winged helix DNA-binding domain"/>
    <property type="match status" value="1"/>
</dbReference>
<dbReference type="HAMAP" id="MF_01247">
    <property type="entry name" value="HTH_type_MalT"/>
    <property type="match status" value="1"/>
</dbReference>
<dbReference type="InterPro" id="IPR027417">
    <property type="entry name" value="P-loop_NTPase"/>
</dbReference>
<dbReference type="InterPro" id="IPR016032">
    <property type="entry name" value="Sig_transdc_resp-reg_C-effctor"/>
</dbReference>
<dbReference type="InterPro" id="IPR011990">
    <property type="entry name" value="TPR-like_helical_dom_sf"/>
</dbReference>
<dbReference type="InterPro" id="IPR041617">
    <property type="entry name" value="TPR_MalT"/>
</dbReference>
<dbReference type="InterPro" id="IPR023768">
    <property type="entry name" value="Tscrpt_reg_HTH_MalT"/>
</dbReference>
<dbReference type="InterPro" id="IPR000792">
    <property type="entry name" value="Tscrpt_reg_LuxR_C"/>
</dbReference>
<dbReference type="InterPro" id="IPR036388">
    <property type="entry name" value="WH-like_DNA-bd_sf"/>
</dbReference>
<dbReference type="NCBIfam" id="NF003420">
    <property type="entry name" value="PRK04841.1"/>
    <property type="match status" value="1"/>
</dbReference>
<dbReference type="PANTHER" id="PTHR44688">
    <property type="entry name" value="DNA-BINDING TRANSCRIPTIONAL ACTIVATOR DEVR_DOSR"/>
    <property type="match status" value="1"/>
</dbReference>
<dbReference type="PANTHER" id="PTHR44688:SF16">
    <property type="entry name" value="DNA-BINDING TRANSCRIPTIONAL ACTIVATOR DEVR_DOSR"/>
    <property type="match status" value="1"/>
</dbReference>
<dbReference type="Pfam" id="PF00196">
    <property type="entry name" value="GerE"/>
    <property type="match status" value="1"/>
</dbReference>
<dbReference type="Pfam" id="PF17874">
    <property type="entry name" value="TPR_MalT"/>
    <property type="match status" value="1"/>
</dbReference>
<dbReference type="PRINTS" id="PR00038">
    <property type="entry name" value="HTHLUXR"/>
</dbReference>
<dbReference type="SMART" id="SM00421">
    <property type="entry name" value="HTH_LUXR"/>
    <property type="match status" value="1"/>
</dbReference>
<dbReference type="SUPFAM" id="SSF46894">
    <property type="entry name" value="C-terminal effector domain of the bipartite response regulators"/>
    <property type="match status" value="1"/>
</dbReference>
<dbReference type="SUPFAM" id="SSF52540">
    <property type="entry name" value="P-loop containing nucleoside triphosphate hydrolases"/>
    <property type="match status" value="1"/>
</dbReference>
<dbReference type="SUPFAM" id="SSF48452">
    <property type="entry name" value="TPR-like"/>
    <property type="match status" value="1"/>
</dbReference>
<dbReference type="PROSITE" id="PS00622">
    <property type="entry name" value="HTH_LUXR_1"/>
    <property type="match status" value="1"/>
</dbReference>
<dbReference type="PROSITE" id="PS50043">
    <property type="entry name" value="HTH_LUXR_2"/>
    <property type="match status" value="1"/>
</dbReference>